<gene>
    <name type="primary">MT-ND6</name>
    <name type="synonym">MTND6</name>
    <name type="synonym">NADH6</name>
    <name type="synonym">ND6</name>
</gene>
<geneLocation type="mitochondrion"/>
<evidence type="ECO:0000250" key="1"/>
<evidence type="ECO:0000255" key="2"/>
<evidence type="ECO:0000305" key="3"/>
<name>NU6M_PTYAL</name>
<reference key="1">
    <citation type="journal article" date="1994" name="Curr. Genet.">
        <title>Intragenic rearrangements in the mitochondrial NADH dehydrogenase subunit 6 gene of vertebrates.</title>
        <authorList>
            <person name="Moum T."/>
            <person name="Willassen N.P."/>
            <person name="Johansen S."/>
        </authorList>
    </citation>
    <scope>NUCLEOTIDE SEQUENCE [GENOMIC DNA]</scope>
</reference>
<comment type="function">
    <text evidence="1">Core subunit of the mitochondrial membrane respiratory chain NADH dehydrogenase (Complex I) that is believed to belong to the minimal assembly required for catalysis. Complex I functions in the transfer of electrons from NADH to the respiratory chain. The immediate electron acceptor for the enzyme is believed to be ubiquinone (By similarity).</text>
</comment>
<comment type="catalytic activity">
    <reaction>
        <text>a ubiquinone + NADH + 5 H(+)(in) = a ubiquinol + NAD(+) + 4 H(+)(out)</text>
        <dbReference type="Rhea" id="RHEA:29091"/>
        <dbReference type="Rhea" id="RHEA-COMP:9565"/>
        <dbReference type="Rhea" id="RHEA-COMP:9566"/>
        <dbReference type="ChEBI" id="CHEBI:15378"/>
        <dbReference type="ChEBI" id="CHEBI:16389"/>
        <dbReference type="ChEBI" id="CHEBI:17976"/>
        <dbReference type="ChEBI" id="CHEBI:57540"/>
        <dbReference type="ChEBI" id="CHEBI:57945"/>
        <dbReference type="EC" id="7.1.1.2"/>
    </reaction>
</comment>
<comment type="subcellular location">
    <subcellularLocation>
        <location evidence="3">Mitochondrion membrane</location>
        <topology evidence="3">Multi-pass membrane protein</topology>
    </subcellularLocation>
</comment>
<comment type="similarity">
    <text evidence="3">Belongs to the complex I subunit 6 family.</text>
</comment>
<protein>
    <recommendedName>
        <fullName>NADH-ubiquinone oxidoreductase chain 6</fullName>
        <ecNumber>7.1.1.2</ecNumber>
    </recommendedName>
    <alternativeName>
        <fullName>NADH dehydrogenase subunit 6</fullName>
    </alternativeName>
</protein>
<organism>
    <name type="scientific">Ptychoramphus aleuticus</name>
    <name type="common">Cassin's auklet</name>
    <name type="synonym">Uria aleutica</name>
    <dbReference type="NCBI Taxonomy" id="28706"/>
    <lineage>
        <taxon>Eukaryota</taxon>
        <taxon>Metazoa</taxon>
        <taxon>Chordata</taxon>
        <taxon>Craniata</taxon>
        <taxon>Vertebrata</taxon>
        <taxon>Euteleostomi</taxon>
        <taxon>Archelosauria</taxon>
        <taxon>Archosauria</taxon>
        <taxon>Dinosauria</taxon>
        <taxon>Saurischia</taxon>
        <taxon>Theropoda</taxon>
        <taxon>Coelurosauria</taxon>
        <taxon>Aves</taxon>
        <taxon>Neognathae</taxon>
        <taxon>Neoaves</taxon>
        <taxon>Charadriiformes</taxon>
        <taxon>Alcidae</taxon>
        <taxon>Ptychoramphus</taxon>
    </lineage>
</organism>
<feature type="chain" id="PRO_0000118324" description="NADH-ubiquinone oxidoreductase chain 6">
    <location>
        <begin position="1"/>
        <end position="173"/>
    </location>
</feature>
<feature type="transmembrane region" description="Helical" evidence="2">
    <location>
        <begin position="1"/>
        <end position="21"/>
    </location>
</feature>
<feature type="transmembrane region" description="Helical" evidence="2">
    <location>
        <begin position="27"/>
        <end position="47"/>
    </location>
</feature>
<feature type="transmembrane region" description="Helical" evidence="2">
    <location>
        <begin position="48"/>
        <end position="68"/>
    </location>
</feature>
<feature type="transmembrane region" description="Helical" evidence="2">
    <location>
        <begin position="87"/>
        <end position="107"/>
    </location>
</feature>
<feature type="transmembrane region" description="Helical" evidence="2">
    <location>
        <begin position="139"/>
        <end position="159"/>
    </location>
</feature>
<keyword id="KW-0249">Electron transport</keyword>
<keyword id="KW-0472">Membrane</keyword>
<keyword id="KW-0496">Mitochondrion</keyword>
<keyword id="KW-0520">NAD</keyword>
<keyword id="KW-0679">Respiratory chain</keyword>
<keyword id="KW-1278">Translocase</keyword>
<keyword id="KW-0812">Transmembrane</keyword>
<keyword id="KW-1133">Transmembrane helix</keyword>
<keyword id="KW-0813">Transport</keyword>
<keyword id="KW-0830">Ubiquinone</keyword>
<accession>P43203</accession>
<sequence length="173" mass="18036">MTYFVLFLGLCFVLGGLAVASNPSPYYGVVGLVLASVAGCGWLLSLGVSFVSLVLFMVYLGGMLVVFVYSVSLAADPFPEAWGDWGVVGYGVGFVVVLVVGLVVGGFVGDLDFGVVTVDSVGMFSVRLDFSGVAMFYSCGVGMFLVAGWGLLLTLFVVLELVRGLSRGAIRAV</sequence>
<dbReference type="EC" id="7.1.1.2"/>
<dbReference type="EMBL" id="X73924">
    <property type="protein sequence ID" value="CAA52129.1"/>
    <property type="molecule type" value="Genomic_DNA"/>
</dbReference>
<dbReference type="PIR" id="S44405">
    <property type="entry name" value="S44405"/>
</dbReference>
<dbReference type="SMR" id="P43203"/>
<dbReference type="GO" id="GO:0031966">
    <property type="term" value="C:mitochondrial membrane"/>
    <property type="evidence" value="ECO:0007669"/>
    <property type="project" value="UniProtKB-SubCell"/>
</dbReference>
<dbReference type="GO" id="GO:0008137">
    <property type="term" value="F:NADH dehydrogenase (ubiquinone) activity"/>
    <property type="evidence" value="ECO:0007669"/>
    <property type="project" value="UniProtKB-EC"/>
</dbReference>
<dbReference type="Gene3D" id="1.20.120.1200">
    <property type="entry name" value="NADH-ubiquinone/plastoquinone oxidoreductase chain 6, subunit NuoJ"/>
    <property type="match status" value="1"/>
</dbReference>
<dbReference type="InterPro" id="IPR050269">
    <property type="entry name" value="ComplexI_Subunit6"/>
</dbReference>
<dbReference type="InterPro" id="IPR001457">
    <property type="entry name" value="NADH_UbQ/plastoQ_OxRdtase_su6"/>
</dbReference>
<dbReference type="InterPro" id="IPR042106">
    <property type="entry name" value="Nuo/plastoQ_OxRdtase_6_NuoJ"/>
</dbReference>
<dbReference type="PANTHER" id="PTHR11435">
    <property type="entry name" value="NADH UBIQUINONE OXIDOREDUCTASE SUBUNIT ND6"/>
    <property type="match status" value="1"/>
</dbReference>
<dbReference type="PANTHER" id="PTHR11435:SF1">
    <property type="entry name" value="NADH-UBIQUINONE OXIDOREDUCTASE CHAIN 6"/>
    <property type="match status" value="1"/>
</dbReference>
<dbReference type="Pfam" id="PF00499">
    <property type="entry name" value="Oxidored_q3"/>
    <property type="match status" value="1"/>
</dbReference>
<proteinExistence type="inferred from homology"/>